<protein>
    <recommendedName>
        <fullName evidence="1">Protease</fullName>
        <ecNumber evidence="1">3.4.22.39</ecNumber>
    </recommendedName>
    <alternativeName>
        <fullName evidence="1">Adenain</fullName>
    </alternativeName>
    <alternativeName>
        <fullName evidence="1">Adenovirus protease</fullName>
        <shortName evidence="1">AVP</shortName>
    </alternativeName>
    <alternativeName>
        <fullName evidence="1">Adenovirus proteinase</fullName>
    </alternativeName>
    <alternativeName>
        <fullName evidence="1">Endoprotease</fullName>
    </alternativeName>
</protein>
<proteinExistence type="inferred from homology"/>
<name>PRO_ADEB4</name>
<gene>
    <name evidence="1" type="primary">L3</name>
</gene>
<keyword id="KW-0068">Autocatalytic cleavage</keyword>
<keyword id="KW-1015">Disulfide bond</keyword>
<keyword id="KW-0238">DNA-binding</keyword>
<keyword id="KW-1048">Host nucleus</keyword>
<keyword id="KW-0378">Hydrolase</keyword>
<keyword id="KW-0426">Late protein</keyword>
<keyword id="KW-0645">Protease</keyword>
<keyword id="KW-1185">Reference proteome</keyword>
<keyword id="KW-0788">Thiol protease</keyword>
<keyword id="KW-0946">Virion</keyword>
<feature type="chain" id="PRO_0000218034" description="Protease">
    <location>
        <begin position="1"/>
        <end position="201"/>
    </location>
</feature>
<feature type="active site" evidence="1">
    <location>
        <position position="55"/>
    </location>
</feature>
<feature type="active site" evidence="1">
    <location>
        <position position="72"/>
    </location>
</feature>
<feature type="active site" evidence="1">
    <location>
        <position position="122"/>
    </location>
</feature>
<feature type="site" description="Cleavage; by autolysis" evidence="1">
    <location>
        <begin position="52"/>
        <end position="53"/>
    </location>
</feature>
<feature type="disulfide bond" description="Interchain (with C-10 in cleaved protease cofactor pVI-C)" evidence="1">
    <location>
        <position position="104"/>
    </location>
</feature>
<sequence length="201" mass="23027">MSGTSESELKHLLSSLHLTYGFLGTFDCRFPGFLQKNKVQTAIVNTGPREKGGVHWVAMAWDPIYYKMYIFDPLGWKESQLQSLYNYSYQSMLKRSALTESERCITVEKNTQSVQCTCSGACGLFCVFFLYCFYKYRGKAFNNELFQSLNGASPSLTPSDPSSLHKNQDILYDFFICKSSYFRHNKKMLISNTKLGLIKSH</sequence>
<evidence type="ECO:0000255" key="1">
    <source>
        <dbReference type="HAMAP-Rule" id="MF_04059"/>
    </source>
</evidence>
<dbReference type="EC" id="3.4.22.39" evidence="1"/>
<dbReference type="EMBL" id="AF036092">
    <property type="protein sequence ID" value="AAC41021.2"/>
    <property type="molecule type" value="Genomic_DNA"/>
</dbReference>
<dbReference type="RefSeq" id="NP_077398.1">
    <property type="nucleotide sequence ID" value="NC_002685.2"/>
</dbReference>
<dbReference type="SMR" id="O71150"/>
<dbReference type="MEROPS" id="C05.001"/>
<dbReference type="KEGG" id="vg:2948451"/>
<dbReference type="Proteomes" id="UP000172814">
    <property type="component" value="Genome"/>
</dbReference>
<dbReference type="GO" id="GO:0042025">
    <property type="term" value="C:host cell nucleus"/>
    <property type="evidence" value="ECO:0007669"/>
    <property type="project" value="UniProtKB-SubCell"/>
</dbReference>
<dbReference type="GO" id="GO:0044423">
    <property type="term" value="C:virion component"/>
    <property type="evidence" value="ECO:0007669"/>
    <property type="project" value="UniProtKB-UniRule"/>
</dbReference>
<dbReference type="GO" id="GO:0004197">
    <property type="term" value="F:cysteine-type endopeptidase activity"/>
    <property type="evidence" value="ECO:0007669"/>
    <property type="project" value="UniProtKB-UniRule"/>
</dbReference>
<dbReference type="GO" id="GO:0003677">
    <property type="term" value="F:DNA binding"/>
    <property type="evidence" value="ECO:0007669"/>
    <property type="project" value="UniProtKB-UniRule"/>
</dbReference>
<dbReference type="GO" id="GO:0006508">
    <property type="term" value="P:proteolysis"/>
    <property type="evidence" value="ECO:0007669"/>
    <property type="project" value="UniProtKB-KW"/>
</dbReference>
<dbReference type="Gene3D" id="3.40.395.10">
    <property type="entry name" value="Adenoviral Proteinase, Chain A"/>
    <property type="match status" value="1"/>
</dbReference>
<dbReference type="HAMAP" id="MF_04059">
    <property type="entry name" value="ADV_PRO"/>
    <property type="match status" value="1"/>
</dbReference>
<dbReference type="InterPro" id="IPR038765">
    <property type="entry name" value="Papain-like_cys_pep_sf"/>
</dbReference>
<dbReference type="InterPro" id="IPR000855">
    <property type="entry name" value="Peptidase_C5"/>
</dbReference>
<dbReference type="Pfam" id="PF00770">
    <property type="entry name" value="Peptidase_C5"/>
    <property type="match status" value="1"/>
</dbReference>
<dbReference type="PIRSF" id="PIRSF001218">
    <property type="entry name" value="Protease_ADV"/>
    <property type="match status" value="1"/>
</dbReference>
<dbReference type="PRINTS" id="PR00703">
    <property type="entry name" value="ADVENDOPTASE"/>
</dbReference>
<dbReference type="SUPFAM" id="SSF54001">
    <property type="entry name" value="Cysteine proteinases"/>
    <property type="match status" value="1"/>
</dbReference>
<reference key="1">
    <citation type="submission" date="2003-08" db="EMBL/GenBank/DDBJ databases">
        <title>Analysis of the complete genome sequence of bovine adenovirus type 4 confirms the characteristic features of the members of the new genus Atadenovirus.</title>
        <authorList>
            <person name="Benko M."/>
            <person name="Dan A."/>
            <person name="Banrevi A."/>
            <person name="Harrach B."/>
        </authorList>
    </citation>
    <scope>NUCLEOTIDE SEQUENCE [LARGE SCALE GENOMIC DNA]</scope>
    <source>
        <strain>THT/62</strain>
    </source>
</reference>
<organism>
    <name type="scientific">Bovine adenovirus 4</name>
    <name type="common">BAdV-4</name>
    <dbReference type="NCBI Taxonomy" id="70333"/>
    <lineage>
        <taxon>Viruses</taxon>
        <taxon>Varidnaviria</taxon>
        <taxon>Bamfordvirae</taxon>
        <taxon>Preplasmiviricota</taxon>
        <taxon>Tectiliviricetes</taxon>
        <taxon>Rowavirales</taxon>
        <taxon>Adenoviridae</taxon>
        <taxon>Atadenovirus</taxon>
        <taxon>Bovine atadenovirus D</taxon>
    </lineage>
</organism>
<accession>O71150</accession>
<comment type="function">
    <text evidence="1">Cleaves viral precursor proteins (pTP, pIIIa, pVI, pVII, pVIII, and pX) inside newly assembled particles giving rise to mature virions. Protease complexed to its cofactor slides along the viral DNA to specifically locate and cleave the viral precursors. Mature virions have a weakened organization compared to the unmature virions, thereby facilitating subsequent uncoating. Without maturation, the particle lacks infectivity and is unable to uncoat. Late in adenovirus infection, in the cytoplasm, may participate in the cytoskeleton destruction. Cleaves host cell cytoskeletal keratins K7 and K18.</text>
</comment>
<comment type="catalytic activity">
    <reaction evidence="1">
        <text>Cleaves proteins of the adenovirus and its host cell at two consensus sites: -Yaa-Xaa-Gly-Gly-|-Xaa- and -Yaa-Xaa-Gly-Xaa-|-Gly- (in which Yaa is Met, Ile or Leu, and Xaa is any amino acid).</text>
        <dbReference type="EC" id="3.4.22.39"/>
    </reaction>
</comment>
<comment type="activity regulation">
    <text evidence="1">Requires DNA and protease cofactor for maximal activation. Inside nascent virions, becomes partially activated by binding to the viral DNA, allowing it to cleave the cofactor that binds to the protease and fully activates it. Actin, like the viral protease cofactor, seems to act as a cofactor in the cleavage of cytokeratin 18 and of actin itself.</text>
</comment>
<comment type="subunit">
    <text evidence="1">Interacts with protease cofactor pVI-C; this interaction is necessary for protease activation.</text>
</comment>
<comment type="subcellular location">
    <subcellularLocation>
        <location evidence="1">Virion</location>
    </subcellularLocation>
    <subcellularLocation>
        <location evidence="1">Host nucleus</location>
    </subcellularLocation>
    <text evidence="1">Present in about 10 copies per virion.</text>
</comment>
<comment type="induction">
    <text evidence="1">Expressed in the late phase of the viral replicative cycle.</text>
</comment>
<comment type="miscellaneous">
    <text evidence="1">All late proteins expressed from the major late promoter are produced by alternative splicing and alternative polyadenylation of the same gene giving rise to non-overlapping ORFs. A leader sequence is present in the N-terminus of all these mRNAs and is recognized by the viral shutoff protein to provide expression although conventional translation via ribosome scanning from the cap has been shut off in the host cell.</text>
</comment>
<comment type="similarity">
    <text evidence="1">Belongs to the peptidase C5 family.</text>
</comment>
<organismHost>
    <name type="scientific">Bos taurus</name>
    <name type="common">Bovine</name>
    <dbReference type="NCBI Taxonomy" id="9913"/>
</organismHost>